<evidence type="ECO:0000255" key="1"/>
<evidence type="ECO:0000305" key="2"/>
<keyword id="KW-0472">Membrane</keyword>
<keyword id="KW-1185">Reference proteome</keyword>
<keyword id="KW-0812">Transmembrane</keyword>
<keyword id="KW-1133">Transmembrane helix</keyword>
<accession>Q91G04</accession>
<organismHost>
    <name type="scientific">Acheta domesticus</name>
    <name type="common">House cricket</name>
    <dbReference type="NCBI Taxonomy" id="6997"/>
</organismHost>
<organismHost>
    <name type="scientific">Chilo suppressalis</name>
    <name type="common">Asiatic rice borer moth</name>
    <dbReference type="NCBI Taxonomy" id="168631"/>
</organismHost>
<organismHost>
    <name type="scientific">Gryllus bimaculatus</name>
    <name type="common">Two-spotted cricket</name>
    <dbReference type="NCBI Taxonomy" id="6999"/>
</organismHost>
<organismHost>
    <name type="scientific">Gryllus campestris</name>
    <dbReference type="NCBI Taxonomy" id="58607"/>
</organismHost>
<organismHost>
    <name type="scientific">Spodoptera frugiperda</name>
    <name type="common">Fall armyworm</name>
    <dbReference type="NCBI Taxonomy" id="7108"/>
</organismHost>
<comment type="subcellular location">
    <subcellularLocation>
        <location evidence="2">Membrane</location>
        <topology evidence="2">Multi-pass membrane protein</topology>
    </subcellularLocation>
</comment>
<proteinExistence type="predicted"/>
<dbReference type="EMBL" id="AF303741">
    <property type="protein sequence ID" value="AAK82028.1"/>
    <property type="molecule type" value="Genomic_DNA"/>
</dbReference>
<dbReference type="RefSeq" id="NP_149598.1">
    <property type="nucleotide sequence ID" value="NC_003038.1"/>
</dbReference>
<dbReference type="SMR" id="Q91G04"/>
<dbReference type="KEGG" id="vg:1733102"/>
<dbReference type="Proteomes" id="UP000001359">
    <property type="component" value="Genome"/>
</dbReference>
<dbReference type="GO" id="GO:0016020">
    <property type="term" value="C:membrane"/>
    <property type="evidence" value="ECO:0007669"/>
    <property type="project" value="UniProtKB-SubCell"/>
</dbReference>
<gene>
    <name type="ORF">IIV6-135R</name>
</gene>
<name>135R_IIV6</name>
<organism>
    <name type="scientific">Invertebrate iridescent virus 6</name>
    <name type="common">IIV-6</name>
    <name type="synonym">Chilo iridescent virus</name>
    <dbReference type="NCBI Taxonomy" id="176652"/>
    <lineage>
        <taxon>Viruses</taxon>
        <taxon>Varidnaviria</taxon>
        <taxon>Bamfordvirae</taxon>
        <taxon>Nucleocytoviricota</taxon>
        <taxon>Megaviricetes</taxon>
        <taxon>Pimascovirales</taxon>
        <taxon>Iridoviridae</taxon>
        <taxon>Betairidovirinae</taxon>
        <taxon>Iridovirus</taxon>
    </lineage>
</organism>
<sequence length="71" mass="8691">MTKFTFSRFVIFSLFFTFISVSTFGNINFRFIVCKWTIFSFVALFYIFTHTSFTSLCFFGLRLFWHFFPRM</sequence>
<reference key="1">
    <citation type="journal article" date="2001" name="Virology">
        <title>Analysis of the first complete DNA sequence of an invertebrate iridovirus: coding strategy of the genome of Chilo iridescent virus.</title>
        <authorList>
            <person name="Jakob N.J."/>
            <person name="Mueller K."/>
            <person name="Bahr U."/>
            <person name="Darai G."/>
        </authorList>
    </citation>
    <scope>NUCLEOTIDE SEQUENCE [LARGE SCALE GENOMIC DNA]</scope>
</reference>
<reference key="2">
    <citation type="journal article" date="2007" name="Virol. J.">
        <title>Comparative genomic analysis of the family Iridoviridae: re-annotating and defining the core set of iridovirus genes.</title>
        <authorList>
            <person name="Eaton H.E."/>
            <person name="Metcalf J."/>
            <person name="Penny E."/>
            <person name="Tcherepanov V."/>
            <person name="Upton C."/>
            <person name="Brunetti C.R."/>
        </authorList>
    </citation>
    <scope>GENOME REANNOTATION</scope>
</reference>
<protein>
    <recommendedName>
        <fullName>Uncharacterized protein 135R</fullName>
    </recommendedName>
</protein>
<feature type="chain" id="PRO_0000378004" description="Uncharacterized protein 135R">
    <location>
        <begin position="1"/>
        <end position="71"/>
    </location>
</feature>
<feature type="transmembrane region" description="Helical" evidence="1">
    <location>
        <begin position="9"/>
        <end position="29"/>
    </location>
</feature>
<feature type="transmembrane region" description="Helical" evidence="1">
    <location>
        <begin position="41"/>
        <end position="61"/>
    </location>
</feature>